<gene>
    <name type="primary">pat3-k1</name>
</gene>
<proteinExistence type="evidence at protein level"/>
<evidence type="ECO:0000250" key="1"/>
<evidence type="ECO:0000255" key="2"/>
<evidence type="ECO:0000255" key="3">
    <source>
        <dbReference type="PROSITE-ProRule" id="PRU01161"/>
    </source>
</evidence>
<evidence type="ECO:0000269" key="4">
    <source>
    </source>
</evidence>
<evidence type="ECO:0000305" key="5"/>
<comment type="subcellular location">
    <subcellularLocation>
        <location evidence="1">Vacuole</location>
    </subcellularLocation>
</comment>
<comment type="tissue specificity">
    <text evidence="4">Tuber.</text>
</comment>
<comment type="domain">
    <text>The nitrogen atoms of the two glycine residues in the GGXR motif define the oxyanion hole, and stabilize the oxyanion that forms during the nucleophilic attack by the catalytic serine during substrate cleavage.</text>
</comment>
<comment type="PTM">
    <text evidence="4">N-glycosylated.</text>
</comment>
<comment type="miscellaneous">
    <text>Patatin have a dual role as a somatic storage protein and as an enzyme involved in host resistance.</text>
</comment>
<comment type="similarity">
    <text evidence="5">Belongs to the patatin family.</text>
</comment>
<comment type="caution">
    <text evidence="5">Lacks the conserved Ser residue involved in nucleophilic attack and essential for hydrolase activity. Its enzyme activity is therefore unsure.</text>
</comment>
<organism>
    <name type="scientific">Solanum tuberosum</name>
    <name type="common">Potato</name>
    <dbReference type="NCBI Taxonomy" id="4113"/>
    <lineage>
        <taxon>Eukaryota</taxon>
        <taxon>Viridiplantae</taxon>
        <taxon>Streptophyta</taxon>
        <taxon>Embryophyta</taxon>
        <taxon>Tracheophyta</taxon>
        <taxon>Spermatophyta</taxon>
        <taxon>Magnoliopsida</taxon>
        <taxon>eudicotyledons</taxon>
        <taxon>Gunneridae</taxon>
        <taxon>Pentapetalae</taxon>
        <taxon>asterids</taxon>
        <taxon>lamiids</taxon>
        <taxon>Solanales</taxon>
        <taxon>Solanaceae</taxon>
        <taxon>Solanoideae</taxon>
        <taxon>Solaneae</taxon>
        <taxon>Solanum</taxon>
    </lineage>
</organism>
<name>PT3K1_SOLTU</name>
<feature type="signal peptide" evidence="4">
    <location>
        <begin position="1"/>
        <end position="11"/>
    </location>
</feature>
<feature type="chain" id="PRO_0000296713" description="Probable inactive patatin-3-Kuras 1">
    <location>
        <begin position="12"/>
        <end position="374"/>
    </location>
</feature>
<feature type="domain" description="PNPLA" evidence="3">
    <location>
        <begin position="20"/>
        <end position="217"/>
    </location>
</feature>
<feature type="short sequence motif" description="GXGXXG" evidence="3">
    <location>
        <begin position="24"/>
        <end position="29"/>
    </location>
</feature>
<feature type="active site" description="Proton acceptor" evidence="1">
    <location>
        <position position="204"/>
    </location>
</feature>
<feature type="glycosylation site" description="N-linked (GlcNAc...) asparagine" evidence="4">
    <location>
        <position position="48"/>
    </location>
</feature>
<feature type="glycosylation site" description="N-linked (GlcNAc...) asparagine" evidence="4">
    <location>
        <position position="191"/>
    </location>
</feature>
<feature type="glycosylation site" description="N-linked (GlcNAc...) asparagine" evidence="2">
    <location>
        <position position="257"/>
    </location>
</feature>
<dbReference type="EMBL" id="DQ114421">
    <property type="protein sequence ID" value="AAZ75962.1"/>
    <property type="molecule type" value="mRNA"/>
</dbReference>
<dbReference type="SMR" id="Q3YJS9"/>
<dbReference type="GlyCosmos" id="Q3YJS9">
    <property type="glycosylation" value="3 sites, No reported glycans"/>
</dbReference>
<dbReference type="iPTMnet" id="Q3YJS9"/>
<dbReference type="ProMEX" id="Q3YJS9"/>
<dbReference type="InParanoid" id="Q3YJS9"/>
<dbReference type="Proteomes" id="UP000011115">
    <property type="component" value="Unassembled WGS sequence"/>
</dbReference>
<dbReference type="ExpressionAtlas" id="Q3YJS9">
    <property type="expression patterns" value="baseline and differential"/>
</dbReference>
<dbReference type="GO" id="GO:0005773">
    <property type="term" value="C:vacuole"/>
    <property type="evidence" value="ECO:0007669"/>
    <property type="project" value="UniProtKB-SubCell"/>
</dbReference>
<dbReference type="GO" id="GO:0047372">
    <property type="term" value="F:monoacylglycerol lipase activity"/>
    <property type="evidence" value="ECO:0000318"/>
    <property type="project" value="GO_Central"/>
</dbReference>
<dbReference type="GO" id="GO:0045735">
    <property type="term" value="F:nutrient reservoir activity"/>
    <property type="evidence" value="ECO:0007669"/>
    <property type="project" value="UniProtKB-KW"/>
</dbReference>
<dbReference type="GO" id="GO:0004620">
    <property type="term" value="F:phospholipase activity"/>
    <property type="evidence" value="ECO:0000318"/>
    <property type="project" value="GO_Central"/>
</dbReference>
<dbReference type="GO" id="GO:0006952">
    <property type="term" value="P:defense response"/>
    <property type="evidence" value="ECO:0007669"/>
    <property type="project" value="UniProtKB-KW"/>
</dbReference>
<dbReference type="GO" id="GO:0006629">
    <property type="term" value="P:lipid metabolic process"/>
    <property type="evidence" value="ECO:0007669"/>
    <property type="project" value="UniProtKB-KW"/>
</dbReference>
<dbReference type="Gene3D" id="3.40.1090.10">
    <property type="entry name" value="Cytosolic phospholipase A2 catalytic domain"/>
    <property type="match status" value="1"/>
</dbReference>
<dbReference type="InterPro" id="IPR016035">
    <property type="entry name" value="Acyl_Trfase/lysoPLipase"/>
</dbReference>
<dbReference type="InterPro" id="IPR002641">
    <property type="entry name" value="PNPLA_dom"/>
</dbReference>
<dbReference type="PANTHER" id="PTHR32176:SF85">
    <property type="entry name" value="PATATIN GROUP D-2"/>
    <property type="match status" value="1"/>
</dbReference>
<dbReference type="PANTHER" id="PTHR32176">
    <property type="entry name" value="XYLOSE ISOMERASE"/>
    <property type="match status" value="1"/>
</dbReference>
<dbReference type="Pfam" id="PF01734">
    <property type="entry name" value="Patatin"/>
    <property type="match status" value="1"/>
</dbReference>
<dbReference type="SUPFAM" id="SSF52151">
    <property type="entry name" value="FabD/lysophospholipase-like"/>
    <property type="match status" value="1"/>
</dbReference>
<dbReference type="PROSITE" id="PS51635">
    <property type="entry name" value="PNPLA"/>
    <property type="match status" value="1"/>
</dbReference>
<reference key="1">
    <citation type="journal article" date="2006" name="FEBS J.">
        <title>Patatins, Kunitz protease inhibitors and other major proteins in tuber of potato cv. Kuras.</title>
        <authorList>
            <person name="Bauw G."/>
            <person name="Nielsen H.V."/>
            <person name="Emmersen J."/>
            <person name="Nielsen K.L."/>
            <person name="Joergensen M."/>
            <person name="Welinder K.G."/>
        </authorList>
    </citation>
    <scope>NUCLEOTIDE SEQUENCE [MRNA]</scope>
    <scope>PROTEIN SEQUENCE OF 12-126; 132-156; 169-234; 240-256 AND 266-356</scope>
    <scope>IDENTIFICATION BY MASS SPECTROMETRY</scope>
    <scope>TISSUE SPECIFICITY</scope>
    <scope>GLYCOSYLATION AT ASN-48 AND ASN-191</scope>
    <source>
        <strain>cv. Kuras</strain>
        <tissue>Tuber</tissue>
    </source>
</reference>
<keyword id="KW-0903">Direct protein sequencing</keyword>
<keyword id="KW-0325">Glycoprotein</keyword>
<keyword id="KW-0443">Lipid metabolism</keyword>
<keyword id="KW-0611">Plant defense</keyword>
<keyword id="KW-1185">Reference proteome</keyword>
<keyword id="KW-0732">Signal</keyword>
<keyword id="KW-0758">Storage protein</keyword>
<keyword id="KW-0926">Vacuole</keyword>
<protein>
    <recommendedName>
        <fullName>Probable inactive patatin-3-Kuras 1</fullName>
    </recommendedName>
</protein>
<sequence length="374" mass="41193">MMLATTSSTFATLGEMVTVLSIDGGGIKGIIPATILEFLEGQLQEVDNNTDARLADYFDVIGGTGTGGLLTAMITTPNENNRPFAAAKDIIPFYFDHGPKIFEPSGFHLVEPKYDGKYLMQVLQEKLGETRVHQALTEVAISSFDIKTNKPVIFTKSNLAKTPELDAKMYDICYSTAAAPTYFPPHYFATNTSNGDQYDFNLVDGDVAAVDPSLLSISVATRLAQEDPAFASIKSLNYKQMLLLSLGTGTNSEFAKNYTAEEAAKWGILQWMSPLWEMRSAASSYMNDYYLSTVFQALDSQNNYLRVQENALTGTATTFDDASVANMILLVQVGENLLKKSVSEDNHETYEVALKRFAKLLSDRKKLRANKASF</sequence>
<accession>Q3YJS9</accession>